<evidence type="ECO:0000250" key="1">
    <source>
        <dbReference type="UniProtKB" id="Q8WVX9"/>
    </source>
</evidence>
<evidence type="ECO:0000255" key="2"/>
<evidence type="ECO:0000269" key="3">
    <source>
    </source>
</evidence>
<evidence type="ECO:0000305" key="4"/>
<evidence type="ECO:0000312" key="5">
    <source>
        <dbReference type="EMBL" id="AAF57977.2"/>
    </source>
</evidence>
<evidence type="ECO:0000312" key="6">
    <source>
        <dbReference type="EMBL" id="AAK93229.1"/>
    </source>
</evidence>
<comment type="function">
    <text evidence="1">Catalyzes the reduction of C16 or C18 fatty acyl-CoA to fatty alcohols.</text>
</comment>
<comment type="catalytic activity">
    <reaction evidence="1">
        <text>a long-chain fatty acyl-CoA + 2 NADPH + 2 H(+) = a long-chain primary fatty alcohol + 2 NADP(+) + CoA</text>
        <dbReference type="Rhea" id="RHEA:52716"/>
        <dbReference type="ChEBI" id="CHEBI:15378"/>
        <dbReference type="ChEBI" id="CHEBI:57287"/>
        <dbReference type="ChEBI" id="CHEBI:57783"/>
        <dbReference type="ChEBI" id="CHEBI:58349"/>
        <dbReference type="ChEBI" id="CHEBI:77396"/>
        <dbReference type="ChEBI" id="CHEBI:83139"/>
        <dbReference type="EC" id="1.2.1.84"/>
    </reaction>
</comment>
<comment type="subcellular location">
    <subcellularLocation>
        <location evidence="2">Membrane</location>
        <topology evidence="2">Multi-pass membrane protein</topology>
    </subcellularLocation>
</comment>
<comment type="similarity">
    <text evidence="2">Belongs to the fatty acyl-CoA reductase family.</text>
</comment>
<dbReference type="EC" id="1.2.1.84" evidence="1"/>
<dbReference type="EMBL" id="AE013599">
    <property type="protein sequence ID" value="AAF57977.2"/>
    <property type="molecule type" value="Genomic_DNA"/>
</dbReference>
<dbReference type="EMBL" id="AY051805">
    <property type="protein sequence ID" value="AAK93229.1"/>
    <property type="molecule type" value="mRNA"/>
</dbReference>
<dbReference type="RefSeq" id="NP_611140.3">
    <property type="nucleotide sequence ID" value="NM_137296.4"/>
</dbReference>
<dbReference type="SMR" id="Q960W6"/>
<dbReference type="BioGRID" id="62570">
    <property type="interactions" value="9"/>
</dbReference>
<dbReference type="FunCoup" id="Q960W6">
    <property type="interactions" value="122"/>
</dbReference>
<dbReference type="IntAct" id="Q960W6">
    <property type="interactions" value="12"/>
</dbReference>
<dbReference type="STRING" id="7227.FBpp0086266"/>
<dbReference type="PaxDb" id="7227-FBpp0086266"/>
<dbReference type="DNASU" id="36857"/>
<dbReference type="EnsemblMetazoa" id="FBtr0087120">
    <property type="protein sequence ID" value="FBpp0086266"/>
    <property type="gene ID" value="FBgn0034142"/>
</dbReference>
<dbReference type="GeneID" id="36857"/>
<dbReference type="KEGG" id="dme:Dmel_CG8306"/>
<dbReference type="UCSC" id="CG8306-RA">
    <property type="organism name" value="d. melanogaster"/>
</dbReference>
<dbReference type="AGR" id="FB:FBgn0034142"/>
<dbReference type="FlyBase" id="FBgn0034142">
    <property type="gene designation" value="CG8306"/>
</dbReference>
<dbReference type="VEuPathDB" id="VectorBase:FBgn0034142"/>
<dbReference type="eggNOG" id="KOG1221">
    <property type="taxonomic scope" value="Eukaryota"/>
</dbReference>
<dbReference type="GeneTree" id="ENSGT00390000006367"/>
<dbReference type="HOGENOM" id="CLU_024661_0_2_1"/>
<dbReference type="InParanoid" id="Q960W6"/>
<dbReference type="OMA" id="SAVWYPY"/>
<dbReference type="OrthoDB" id="429813at2759"/>
<dbReference type="PhylomeDB" id="Q960W6"/>
<dbReference type="Reactome" id="R-DME-9640463">
    <property type="pathway name" value="Wax biosynthesis"/>
</dbReference>
<dbReference type="BioGRID-ORCS" id="36857">
    <property type="hits" value="0 hits in 3 CRISPR screens"/>
</dbReference>
<dbReference type="GenomeRNAi" id="36857"/>
<dbReference type="PRO" id="PR:Q960W6"/>
<dbReference type="Proteomes" id="UP000000803">
    <property type="component" value="Chromosome 2R"/>
</dbReference>
<dbReference type="Bgee" id="FBgn0034142">
    <property type="expression patterns" value="Expressed in crop (Drosophila) and 141 other cell types or tissues"/>
</dbReference>
<dbReference type="GO" id="GO:0012505">
    <property type="term" value="C:endomembrane system"/>
    <property type="evidence" value="ECO:0007005"/>
    <property type="project" value="FlyBase"/>
</dbReference>
<dbReference type="GO" id="GO:0016020">
    <property type="term" value="C:membrane"/>
    <property type="evidence" value="ECO:0007669"/>
    <property type="project" value="UniProtKB-SubCell"/>
</dbReference>
<dbReference type="GO" id="GO:0005777">
    <property type="term" value="C:peroxisome"/>
    <property type="evidence" value="ECO:0000250"/>
    <property type="project" value="UniProtKB"/>
</dbReference>
<dbReference type="GO" id="GO:0102965">
    <property type="term" value="F:alcohol-forming long-chain fatty acyl-CoA reductase activity"/>
    <property type="evidence" value="ECO:0000250"/>
    <property type="project" value="FlyBase"/>
</dbReference>
<dbReference type="GO" id="GO:0080019">
    <property type="term" value="F:alcohol-forming very long-chain fatty acyl-CoA reductase activity"/>
    <property type="evidence" value="ECO:0000318"/>
    <property type="project" value="GO_Central"/>
</dbReference>
<dbReference type="GO" id="GO:0035336">
    <property type="term" value="P:long-chain fatty-acyl-CoA metabolic process"/>
    <property type="evidence" value="ECO:0000318"/>
    <property type="project" value="GO_Central"/>
</dbReference>
<dbReference type="GO" id="GO:0010025">
    <property type="term" value="P:wax biosynthetic process"/>
    <property type="evidence" value="ECO:0000250"/>
    <property type="project" value="UniProtKB"/>
</dbReference>
<dbReference type="CDD" id="cd05236">
    <property type="entry name" value="FAR-N_SDR_e"/>
    <property type="match status" value="1"/>
</dbReference>
<dbReference type="CDD" id="cd09071">
    <property type="entry name" value="FAR_C"/>
    <property type="match status" value="1"/>
</dbReference>
<dbReference type="FunFam" id="3.40.50.720:FF:000143">
    <property type="entry name" value="Fatty acyl-CoA reductase"/>
    <property type="match status" value="1"/>
</dbReference>
<dbReference type="Gene3D" id="3.40.50.720">
    <property type="entry name" value="NAD(P)-binding Rossmann-like Domain"/>
    <property type="match status" value="1"/>
</dbReference>
<dbReference type="InterPro" id="IPR026055">
    <property type="entry name" value="FAR"/>
</dbReference>
<dbReference type="InterPro" id="IPR033640">
    <property type="entry name" value="FAR_C"/>
</dbReference>
<dbReference type="InterPro" id="IPR013120">
    <property type="entry name" value="Far_NAD-bd"/>
</dbReference>
<dbReference type="InterPro" id="IPR036291">
    <property type="entry name" value="NAD(P)-bd_dom_sf"/>
</dbReference>
<dbReference type="PANTHER" id="PTHR11011:SF45">
    <property type="entry name" value="FATTY ACYL-COA REDUCTASE CG8306-RELATED"/>
    <property type="match status" value="1"/>
</dbReference>
<dbReference type="PANTHER" id="PTHR11011">
    <property type="entry name" value="MALE STERILITY PROTEIN 2-RELATED"/>
    <property type="match status" value="1"/>
</dbReference>
<dbReference type="Pfam" id="PF07993">
    <property type="entry name" value="NAD_binding_4"/>
    <property type="match status" value="1"/>
</dbReference>
<dbReference type="Pfam" id="PF03015">
    <property type="entry name" value="Sterile"/>
    <property type="match status" value="1"/>
</dbReference>
<dbReference type="SUPFAM" id="SSF51735">
    <property type="entry name" value="NAD(P)-binding Rossmann-fold domains"/>
    <property type="match status" value="1"/>
</dbReference>
<gene>
    <name type="ORF">CG8306</name>
</gene>
<reference evidence="5" key="1">
    <citation type="journal article" date="2000" name="Science">
        <title>The genome sequence of Drosophila melanogaster.</title>
        <authorList>
            <person name="Adams M.D."/>
            <person name="Celniker S.E."/>
            <person name="Holt R.A."/>
            <person name="Evans C.A."/>
            <person name="Gocayne J.D."/>
            <person name="Amanatides P.G."/>
            <person name="Scherer S.E."/>
            <person name="Li P.W."/>
            <person name="Hoskins R.A."/>
            <person name="Galle R.F."/>
            <person name="George R.A."/>
            <person name="Lewis S.E."/>
            <person name="Richards S."/>
            <person name="Ashburner M."/>
            <person name="Henderson S.N."/>
            <person name="Sutton G.G."/>
            <person name="Wortman J.R."/>
            <person name="Yandell M.D."/>
            <person name="Zhang Q."/>
            <person name="Chen L.X."/>
            <person name="Brandon R.C."/>
            <person name="Rogers Y.-H.C."/>
            <person name="Blazej R.G."/>
            <person name="Champe M."/>
            <person name="Pfeiffer B.D."/>
            <person name="Wan K.H."/>
            <person name="Doyle C."/>
            <person name="Baxter E.G."/>
            <person name="Helt G."/>
            <person name="Nelson C.R."/>
            <person name="Miklos G.L.G."/>
            <person name="Abril J.F."/>
            <person name="Agbayani A."/>
            <person name="An H.-J."/>
            <person name="Andrews-Pfannkoch C."/>
            <person name="Baldwin D."/>
            <person name="Ballew R.M."/>
            <person name="Basu A."/>
            <person name="Baxendale J."/>
            <person name="Bayraktaroglu L."/>
            <person name="Beasley E.M."/>
            <person name="Beeson K.Y."/>
            <person name="Benos P.V."/>
            <person name="Berman B.P."/>
            <person name="Bhandari D."/>
            <person name="Bolshakov S."/>
            <person name="Borkova D."/>
            <person name="Botchan M.R."/>
            <person name="Bouck J."/>
            <person name="Brokstein P."/>
            <person name="Brottier P."/>
            <person name="Burtis K.C."/>
            <person name="Busam D.A."/>
            <person name="Butler H."/>
            <person name="Cadieu E."/>
            <person name="Center A."/>
            <person name="Chandra I."/>
            <person name="Cherry J.M."/>
            <person name="Cawley S."/>
            <person name="Dahlke C."/>
            <person name="Davenport L.B."/>
            <person name="Davies P."/>
            <person name="de Pablos B."/>
            <person name="Delcher A."/>
            <person name="Deng Z."/>
            <person name="Mays A.D."/>
            <person name="Dew I."/>
            <person name="Dietz S.M."/>
            <person name="Dodson K."/>
            <person name="Doup L.E."/>
            <person name="Downes M."/>
            <person name="Dugan-Rocha S."/>
            <person name="Dunkov B.C."/>
            <person name="Dunn P."/>
            <person name="Durbin K.J."/>
            <person name="Evangelista C.C."/>
            <person name="Ferraz C."/>
            <person name="Ferriera S."/>
            <person name="Fleischmann W."/>
            <person name="Fosler C."/>
            <person name="Gabrielian A.E."/>
            <person name="Garg N.S."/>
            <person name="Gelbart W.M."/>
            <person name="Glasser K."/>
            <person name="Glodek A."/>
            <person name="Gong F."/>
            <person name="Gorrell J.H."/>
            <person name="Gu Z."/>
            <person name="Guan P."/>
            <person name="Harris M."/>
            <person name="Harris N.L."/>
            <person name="Harvey D.A."/>
            <person name="Heiman T.J."/>
            <person name="Hernandez J.R."/>
            <person name="Houck J."/>
            <person name="Hostin D."/>
            <person name="Houston K.A."/>
            <person name="Howland T.J."/>
            <person name="Wei M.-H."/>
            <person name="Ibegwam C."/>
            <person name="Jalali M."/>
            <person name="Kalush F."/>
            <person name="Karpen G.H."/>
            <person name="Ke Z."/>
            <person name="Kennison J.A."/>
            <person name="Ketchum K.A."/>
            <person name="Kimmel B.E."/>
            <person name="Kodira C.D."/>
            <person name="Kraft C.L."/>
            <person name="Kravitz S."/>
            <person name="Kulp D."/>
            <person name="Lai Z."/>
            <person name="Lasko P."/>
            <person name="Lei Y."/>
            <person name="Levitsky A.A."/>
            <person name="Li J.H."/>
            <person name="Li Z."/>
            <person name="Liang Y."/>
            <person name="Lin X."/>
            <person name="Liu X."/>
            <person name="Mattei B."/>
            <person name="McIntosh T.C."/>
            <person name="McLeod M.P."/>
            <person name="McPherson D."/>
            <person name="Merkulov G."/>
            <person name="Milshina N.V."/>
            <person name="Mobarry C."/>
            <person name="Morris J."/>
            <person name="Moshrefi A."/>
            <person name="Mount S.M."/>
            <person name="Moy M."/>
            <person name="Murphy B."/>
            <person name="Murphy L."/>
            <person name="Muzny D.M."/>
            <person name="Nelson D.L."/>
            <person name="Nelson D.R."/>
            <person name="Nelson K.A."/>
            <person name="Nixon K."/>
            <person name="Nusskern D.R."/>
            <person name="Pacleb J.M."/>
            <person name="Palazzolo M."/>
            <person name="Pittman G.S."/>
            <person name="Pan S."/>
            <person name="Pollard J."/>
            <person name="Puri V."/>
            <person name="Reese M.G."/>
            <person name="Reinert K."/>
            <person name="Remington K."/>
            <person name="Saunders R.D.C."/>
            <person name="Scheeler F."/>
            <person name="Shen H."/>
            <person name="Shue B.C."/>
            <person name="Siden-Kiamos I."/>
            <person name="Simpson M."/>
            <person name="Skupski M.P."/>
            <person name="Smith T.J."/>
            <person name="Spier E."/>
            <person name="Spradling A.C."/>
            <person name="Stapleton M."/>
            <person name="Strong R."/>
            <person name="Sun E."/>
            <person name="Svirskas R."/>
            <person name="Tector C."/>
            <person name="Turner R."/>
            <person name="Venter E."/>
            <person name="Wang A.H."/>
            <person name="Wang X."/>
            <person name="Wang Z.-Y."/>
            <person name="Wassarman D.A."/>
            <person name="Weinstock G.M."/>
            <person name="Weissenbach J."/>
            <person name="Williams S.M."/>
            <person name="Woodage T."/>
            <person name="Worley K.C."/>
            <person name="Wu D."/>
            <person name="Yang S."/>
            <person name="Yao Q.A."/>
            <person name="Ye J."/>
            <person name="Yeh R.-F."/>
            <person name="Zaveri J.S."/>
            <person name="Zhan M."/>
            <person name="Zhang G."/>
            <person name="Zhao Q."/>
            <person name="Zheng L."/>
            <person name="Zheng X.H."/>
            <person name="Zhong F.N."/>
            <person name="Zhong W."/>
            <person name="Zhou X."/>
            <person name="Zhu S.C."/>
            <person name="Zhu X."/>
            <person name="Smith H.O."/>
            <person name="Gibbs R.A."/>
            <person name="Myers E.W."/>
            <person name="Rubin G.M."/>
            <person name="Venter J.C."/>
        </authorList>
    </citation>
    <scope>NUCLEOTIDE SEQUENCE [LARGE SCALE GENOMIC DNA]</scope>
    <source>
        <strain>Berkeley</strain>
    </source>
</reference>
<reference evidence="4 5" key="2">
    <citation type="journal article" date="2002" name="Genome Biol.">
        <title>Annotation of the Drosophila melanogaster euchromatic genome: a systematic review.</title>
        <authorList>
            <person name="Misra S."/>
            <person name="Crosby M.A."/>
            <person name="Mungall C.J."/>
            <person name="Matthews B.B."/>
            <person name="Campbell K.S."/>
            <person name="Hradecky P."/>
            <person name="Huang Y."/>
            <person name="Kaminker J.S."/>
            <person name="Millburn G.H."/>
            <person name="Prochnik S.E."/>
            <person name="Smith C.D."/>
            <person name="Tupy J.L."/>
            <person name="Whitfield E.J."/>
            <person name="Bayraktaroglu L."/>
            <person name="Berman B.P."/>
            <person name="Bettencourt B.R."/>
            <person name="Celniker S.E."/>
            <person name="de Grey A.D.N.J."/>
            <person name="Drysdale R.A."/>
            <person name="Harris N.L."/>
            <person name="Richter J."/>
            <person name="Russo S."/>
            <person name="Schroeder A.J."/>
            <person name="Shu S.Q."/>
            <person name="Stapleton M."/>
            <person name="Yamada C."/>
            <person name="Ashburner M."/>
            <person name="Gelbart W.M."/>
            <person name="Rubin G.M."/>
            <person name="Lewis S.E."/>
        </authorList>
    </citation>
    <scope>GENOME REANNOTATION</scope>
    <source>
        <strain>Berkeley</strain>
    </source>
</reference>
<reference evidence="6" key="3">
    <citation type="journal article" date="2002" name="Genome Biol.">
        <title>A Drosophila full-length cDNA resource.</title>
        <authorList>
            <person name="Stapleton M."/>
            <person name="Carlson J.W."/>
            <person name="Brokstein P."/>
            <person name="Yu C."/>
            <person name="Champe M."/>
            <person name="George R.A."/>
            <person name="Guarin H."/>
            <person name="Kronmiller B."/>
            <person name="Pacleb J.M."/>
            <person name="Park S."/>
            <person name="Wan K.H."/>
            <person name="Rubin G.M."/>
            <person name="Celniker S.E."/>
        </authorList>
    </citation>
    <scope>NUCLEOTIDE SEQUENCE [LARGE SCALE MRNA]</scope>
    <source>
        <strain evidence="6">Berkeley</strain>
        <tissue evidence="3">Embryo</tissue>
    </source>
</reference>
<name>FACR3_DROME</name>
<feature type="chain" id="PRO_0000376021" description="Putative fatty acyl-CoA reductase CG8306">
    <location>
        <begin position="1"/>
        <end position="516"/>
    </location>
</feature>
<feature type="transmembrane region" description="Helical" evidence="2">
    <location>
        <begin position="356"/>
        <end position="376"/>
    </location>
</feature>
<feature type="transmembrane region" description="Helical" evidence="2">
    <location>
        <begin position="471"/>
        <end position="491"/>
    </location>
</feature>
<feature type="transmembrane region" description="Helical" evidence="2">
    <location>
        <begin position="496"/>
        <end position="516"/>
    </location>
</feature>
<keyword id="KW-0444">Lipid biosynthesis</keyword>
<keyword id="KW-0443">Lipid metabolism</keyword>
<keyword id="KW-0472">Membrane</keyword>
<keyword id="KW-0521">NADP</keyword>
<keyword id="KW-0560">Oxidoreductase</keyword>
<keyword id="KW-1185">Reference proteome</keyword>
<keyword id="KW-0812">Transmembrane</keyword>
<keyword id="KW-1133">Transmembrane helix</keyword>
<accession>Q960W6</accession>
<accession>Q9V7R8</accession>
<sequence length="516" mass="58466">MASSPITDFYAGRNVFITGATGFVGVTIVEKLLRDVPNVGTLYLLMRAKKGKSVQERLEELKKNSVFDKFKELQLQSRLSKIVPIEGDVGLEHLGISPKDRQTLIDNVNVVFHSAATLDFFQSLKETTNINLRGTRRVVELCQQIKNLDALVHVSSAYVNAYLTKVEEKLYPAPEDPEKIIQLSETLNDDALKELEPKLLKDHPNTYTFTKHLAEHEVANVASKFPCGIVRPSMITAAWKEPIPGWTISKNGPQGFFMGASKGVLRRLPLDPSIIMDYIPIDVVVNGIITTGYYVNSLQAKNGGRPADLQIFHLTSSTYKPFRFELMTDKINSYLHDYPLNSAVWYPNLRLVKSLWVFRLSAILFHFIPAIILDLVTKIGGGRPILVRLHKNVWNSLNTLEKFIFTEWHFDSKRLLALSKTLNIVDKKKFFIDIGELAWDEYFSNTILGVRQYLSKEPIKNLEKARRKDKILLGLHVALQLSFWYGVFKLIVCLTGISTAKAALVLPVLYYLFGLL</sequence>
<organism>
    <name type="scientific">Drosophila melanogaster</name>
    <name type="common">Fruit fly</name>
    <dbReference type="NCBI Taxonomy" id="7227"/>
    <lineage>
        <taxon>Eukaryota</taxon>
        <taxon>Metazoa</taxon>
        <taxon>Ecdysozoa</taxon>
        <taxon>Arthropoda</taxon>
        <taxon>Hexapoda</taxon>
        <taxon>Insecta</taxon>
        <taxon>Pterygota</taxon>
        <taxon>Neoptera</taxon>
        <taxon>Endopterygota</taxon>
        <taxon>Diptera</taxon>
        <taxon>Brachycera</taxon>
        <taxon>Muscomorpha</taxon>
        <taxon>Ephydroidea</taxon>
        <taxon>Drosophilidae</taxon>
        <taxon>Drosophila</taxon>
        <taxon>Sophophora</taxon>
    </lineage>
</organism>
<proteinExistence type="evidence at transcript level"/>
<protein>
    <recommendedName>
        <fullName evidence="1 5">Putative fatty acyl-CoA reductase CG8306</fullName>
        <ecNumber evidence="1">1.2.1.84</ecNumber>
    </recommendedName>
</protein>